<name>PYRB_RHOJR</name>
<gene>
    <name evidence="1" type="primary">pyrB</name>
    <name type="ordered locus">RHA1_ro07148</name>
</gene>
<dbReference type="EC" id="2.1.3.2" evidence="1"/>
<dbReference type="EMBL" id="CP000431">
    <property type="protein sequence ID" value="ABG98912.1"/>
    <property type="molecule type" value="Genomic_DNA"/>
</dbReference>
<dbReference type="RefSeq" id="WP_009480420.1">
    <property type="nucleotide sequence ID" value="NC_008268.1"/>
</dbReference>
<dbReference type="SMR" id="Q0S0M4"/>
<dbReference type="KEGG" id="rha:RHA1_ro07148"/>
<dbReference type="eggNOG" id="COG0540">
    <property type="taxonomic scope" value="Bacteria"/>
</dbReference>
<dbReference type="HOGENOM" id="CLU_043846_2_0_11"/>
<dbReference type="OrthoDB" id="9774690at2"/>
<dbReference type="UniPathway" id="UPA00070">
    <property type="reaction ID" value="UER00116"/>
</dbReference>
<dbReference type="Proteomes" id="UP000008710">
    <property type="component" value="Chromosome"/>
</dbReference>
<dbReference type="GO" id="GO:0005829">
    <property type="term" value="C:cytosol"/>
    <property type="evidence" value="ECO:0007669"/>
    <property type="project" value="TreeGrafter"/>
</dbReference>
<dbReference type="GO" id="GO:0016597">
    <property type="term" value="F:amino acid binding"/>
    <property type="evidence" value="ECO:0007669"/>
    <property type="project" value="InterPro"/>
</dbReference>
<dbReference type="GO" id="GO:0004070">
    <property type="term" value="F:aspartate carbamoyltransferase activity"/>
    <property type="evidence" value="ECO:0007669"/>
    <property type="project" value="UniProtKB-UniRule"/>
</dbReference>
<dbReference type="GO" id="GO:0006207">
    <property type="term" value="P:'de novo' pyrimidine nucleobase biosynthetic process"/>
    <property type="evidence" value="ECO:0007669"/>
    <property type="project" value="InterPro"/>
</dbReference>
<dbReference type="GO" id="GO:0044205">
    <property type="term" value="P:'de novo' UMP biosynthetic process"/>
    <property type="evidence" value="ECO:0007669"/>
    <property type="project" value="UniProtKB-UniRule"/>
</dbReference>
<dbReference type="GO" id="GO:0006520">
    <property type="term" value="P:amino acid metabolic process"/>
    <property type="evidence" value="ECO:0007669"/>
    <property type="project" value="InterPro"/>
</dbReference>
<dbReference type="FunFam" id="3.40.50.1370:FF:000007">
    <property type="entry name" value="Aspartate carbamoyltransferase"/>
    <property type="match status" value="1"/>
</dbReference>
<dbReference type="Gene3D" id="3.40.50.1370">
    <property type="entry name" value="Aspartate/ornithine carbamoyltransferase"/>
    <property type="match status" value="2"/>
</dbReference>
<dbReference type="HAMAP" id="MF_00001">
    <property type="entry name" value="Asp_carb_tr"/>
    <property type="match status" value="1"/>
</dbReference>
<dbReference type="InterPro" id="IPR006132">
    <property type="entry name" value="Asp/Orn_carbamoyltranf_P-bd"/>
</dbReference>
<dbReference type="InterPro" id="IPR006130">
    <property type="entry name" value="Asp/Orn_carbamoylTrfase"/>
</dbReference>
<dbReference type="InterPro" id="IPR036901">
    <property type="entry name" value="Asp/Orn_carbamoylTrfase_sf"/>
</dbReference>
<dbReference type="InterPro" id="IPR002082">
    <property type="entry name" value="Asp_carbamoyltransf"/>
</dbReference>
<dbReference type="InterPro" id="IPR006131">
    <property type="entry name" value="Asp_carbamoyltransf_Asp/Orn-bd"/>
</dbReference>
<dbReference type="NCBIfam" id="TIGR00670">
    <property type="entry name" value="asp_carb_tr"/>
    <property type="match status" value="1"/>
</dbReference>
<dbReference type="NCBIfam" id="NF002032">
    <property type="entry name" value="PRK00856.1"/>
    <property type="match status" value="1"/>
</dbReference>
<dbReference type="PANTHER" id="PTHR45753:SF6">
    <property type="entry name" value="ASPARTATE CARBAMOYLTRANSFERASE"/>
    <property type="match status" value="1"/>
</dbReference>
<dbReference type="PANTHER" id="PTHR45753">
    <property type="entry name" value="ORNITHINE CARBAMOYLTRANSFERASE, MITOCHONDRIAL"/>
    <property type="match status" value="1"/>
</dbReference>
<dbReference type="Pfam" id="PF00185">
    <property type="entry name" value="OTCace"/>
    <property type="match status" value="1"/>
</dbReference>
<dbReference type="Pfam" id="PF02729">
    <property type="entry name" value="OTCace_N"/>
    <property type="match status" value="1"/>
</dbReference>
<dbReference type="PRINTS" id="PR00100">
    <property type="entry name" value="AOTCASE"/>
</dbReference>
<dbReference type="PRINTS" id="PR00101">
    <property type="entry name" value="ATCASE"/>
</dbReference>
<dbReference type="SUPFAM" id="SSF53671">
    <property type="entry name" value="Aspartate/ornithine carbamoyltransferase"/>
    <property type="match status" value="1"/>
</dbReference>
<dbReference type="PROSITE" id="PS00097">
    <property type="entry name" value="CARBAMOYLTRANSFERASE"/>
    <property type="match status" value="1"/>
</dbReference>
<accession>Q0S0M4</accession>
<feature type="chain" id="PRO_0000301611" description="Aspartate carbamoyltransferase catalytic subunit">
    <location>
        <begin position="1"/>
        <end position="314"/>
    </location>
</feature>
<feature type="binding site" evidence="1">
    <location>
        <position position="55"/>
    </location>
    <ligand>
        <name>carbamoyl phosphate</name>
        <dbReference type="ChEBI" id="CHEBI:58228"/>
    </ligand>
</feature>
<feature type="binding site" evidence="1">
    <location>
        <position position="56"/>
    </location>
    <ligand>
        <name>carbamoyl phosphate</name>
        <dbReference type="ChEBI" id="CHEBI:58228"/>
    </ligand>
</feature>
<feature type="binding site" evidence="1">
    <location>
        <position position="83"/>
    </location>
    <ligand>
        <name>L-aspartate</name>
        <dbReference type="ChEBI" id="CHEBI:29991"/>
    </ligand>
</feature>
<feature type="binding site" evidence="1">
    <location>
        <position position="105"/>
    </location>
    <ligand>
        <name>carbamoyl phosphate</name>
        <dbReference type="ChEBI" id="CHEBI:58228"/>
    </ligand>
</feature>
<feature type="binding site" evidence="1">
    <location>
        <position position="139"/>
    </location>
    <ligand>
        <name>carbamoyl phosphate</name>
        <dbReference type="ChEBI" id="CHEBI:58228"/>
    </ligand>
</feature>
<feature type="binding site" evidence="1">
    <location>
        <position position="142"/>
    </location>
    <ligand>
        <name>carbamoyl phosphate</name>
        <dbReference type="ChEBI" id="CHEBI:58228"/>
    </ligand>
</feature>
<feature type="binding site" evidence="1">
    <location>
        <position position="172"/>
    </location>
    <ligand>
        <name>L-aspartate</name>
        <dbReference type="ChEBI" id="CHEBI:29991"/>
    </ligand>
</feature>
<feature type="binding site" evidence="1">
    <location>
        <position position="226"/>
    </location>
    <ligand>
        <name>L-aspartate</name>
        <dbReference type="ChEBI" id="CHEBI:29991"/>
    </ligand>
</feature>
<feature type="binding site" evidence="1">
    <location>
        <position position="267"/>
    </location>
    <ligand>
        <name>carbamoyl phosphate</name>
        <dbReference type="ChEBI" id="CHEBI:58228"/>
    </ligand>
</feature>
<feature type="binding site" evidence="1">
    <location>
        <position position="268"/>
    </location>
    <ligand>
        <name>carbamoyl phosphate</name>
        <dbReference type="ChEBI" id="CHEBI:58228"/>
    </ligand>
</feature>
<keyword id="KW-0665">Pyrimidine biosynthesis</keyword>
<keyword id="KW-0808">Transferase</keyword>
<comment type="function">
    <text evidence="1">Catalyzes the condensation of carbamoyl phosphate and aspartate to form carbamoyl aspartate and inorganic phosphate, the committed step in the de novo pyrimidine nucleotide biosynthesis pathway.</text>
</comment>
<comment type="catalytic activity">
    <reaction evidence="1">
        <text>carbamoyl phosphate + L-aspartate = N-carbamoyl-L-aspartate + phosphate + H(+)</text>
        <dbReference type="Rhea" id="RHEA:20013"/>
        <dbReference type="ChEBI" id="CHEBI:15378"/>
        <dbReference type="ChEBI" id="CHEBI:29991"/>
        <dbReference type="ChEBI" id="CHEBI:32814"/>
        <dbReference type="ChEBI" id="CHEBI:43474"/>
        <dbReference type="ChEBI" id="CHEBI:58228"/>
        <dbReference type="EC" id="2.1.3.2"/>
    </reaction>
</comment>
<comment type="pathway">
    <text evidence="1">Pyrimidine metabolism; UMP biosynthesis via de novo pathway; (S)-dihydroorotate from bicarbonate: step 2/3.</text>
</comment>
<comment type="subunit">
    <text evidence="1">Heterododecamer (2C3:3R2) of six catalytic PyrB chains organized as two trimers (C3), and six regulatory PyrI chains organized as three dimers (R2).</text>
</comment>
<comment type="similarity">
    <text evidence="1">Belongs to the aspartate/ornithine carbamoyltransferase superfamily. ATCase family.</text>
</comment>
<organism>
    <name type="scientific">Rhodococcus jostii (strain RHA1)</name>
    <dbReference type="NCBI Taxonomy" id="101510"/>
    <lineage>
        <taxon>Bacteria</taxon>
        <taxon>Bacillati</taxon>
        <taxon>Actinomycetota</taxon>
        <taxon>Actinomycetes</taxon>
        <taxon>Mycobacteriales</taxon>
        <taxon>Nocardiaceae</taxon>
        <taxon>Rhodococcus</taxon>
    </lineage>
</organism>
<protein>
    <recommendedName>
        <fullName evidence="1">Aspartate carbamoyltransferase catalytic subunit</fullName>
        <ecNumber evidence="1">2.1.3.2</ecNumber>
    </recommendedName>
    <alternativeName>
        <fullName evidence="1">Aspartate transcarbamylase</fullName>
        <shortName evidence="1">ATCase</shortName>
    </alternativeName>
</protein>
<sequence length="314" mass="33675">MKHLLSIADLTRESAVELLDEAERFEQALLGREVRKLPTLRGRTVMTVFFENSTRTRVSFEVAGKWMSADVINVSASSSSVSKGESLRDTAMTLRAAGADALIVRHPASGAAHQIAKWTGHQDDGGPAVINAGDGTHEHPTQALLDALTLRQRLGDIEGKRIAIVGDILHSRVARSNALLLSMLGAEVVLVAPPTLLPVGVSAWPVSVAHSLDAELPGLDAVLMLRVQAERMNGGFFPSQREYSINYGLSEKRLALLPDHAVVLHPGPMLRGMEIASAVADSTRTAVLQQVTNGVHMRMAVLFRLLVGAEEVAG</sequence>
<reference key="1">
    <citation type="journal article" date="2006" name="Proc. Natl. Acad. Sci. U.S.A.">
        <title>The complete genome of Rhodococcus sp. RHA1 provides insights into a catabolic powerhouse.</title>
        <authorList>
            <person name="McLeod M.P."/>
            <person name="Warren R.L."/>
            <person name="Hsiao W.W.L."/>
            <person name="Araki N."/>
            <person name="Myhre M."/>
            <person name="Fernandes C."/>
            <person name="Miyazawa D."/>
            <person name="Wong W."/>
            <person name="Lillquist A.L."/>
            <person name="Wang D."/>
            <person name="Dosanjh M."/>
            <person name="Hara H."/>
            <person name="Petrescu A."/>
            <person name="Morin R.D."/>
            <person name="Yang G."/>
            <person name="Stott J.M."/>
            <person name="Schein J.E."/>
            <person name="Shin H."/>
            <person name="Smailus D."/>
            <person name="Siddiqui A.S."/>
            <person name="Marra M.A."/>
            <person name="Jones S.J.M."/>
            <person name="Holt R."/>
            <person name="Brinkman F.S.L."/>
            <person name="Miyauchi K."/>
            <person name="Fukuda M."/>
            <person name="Davies J.E."/>
            <person name="Mohn W.W."/>
            <person name="Eltis L.D."/>
        </authorList>
    </citation>
    <scope>NUCLEOTIDE SEQUENCE [LARGE SCALE GENOMIC DNA]</scope>
    <source>
        <strain>RHA1</strain>
    </source>
</reference>
<proteinExistence type="inferred from homology"/>
<evidence type="ECO:0000255" key="1">
    <source>
        <dbReference type="HAMAP-Rule" id="MF_00001"/>
    </source>
</evidence>